<proteinExistence type="predicted"/>
<reference key="1">
    <citation type="journal article" date="1995" name="Science">
        <title>The minimal gene complement of Mycoplasma genitalium.</title>
        <authorList>
            <person name="Fraser C.M."/>
            <person name="Gocayne J.D."/>
            <person name="White O."/>
            <person name="Adams M.D."/>
            <person name="Clayton R.A."/>
            <person name="Fleischmann R.D."/>
            <person name="Bult C.J."/>
            <person name="Kerlavage A.R."/>
            <person name="Sutton G.G."/>
            <person name="Kelley J.M."/>
            <person name="Fritchman J.L."/>
            <person name="Weidman J.F."/>
            <person name="Small K.V."/>
            <person name="Sandusky M."/>
            <person name="Fuhrmann J.L."/>
            <person name="Nguyen D.T."/>
            <person name="Utterback T.R."/>
            <person name="Saudek D.M."/>
            <person name="Phillips C.A."/>
            <person name="Merrick J.M."/>
            <person name="Tomb J.-F."/>
            <person name="Dougherty B.A."/>
            <person name="Bott K.F."/>
            <person name="Hu P.-C."/>
            <person name="Lucier T.S."/>
            <person name="Peterson S.N."/>
            <person name="Smith H.O."/>
            <person name="Hutchison C.A. III"/>
            <person name="Venter J.C."/>
        </authorList>
    </citation>
    <scope>NUCLEOTIDE SEQUENCE [LARGE SCALE GENOMIC DNA]</scope>
    <source>
        <strain>ATCC 33530 / DSM 19775 / NCTC 10195 / G37</strain>
    </source>
</reference>
<accession>P47509</accession>
<feature type="chain" id="PRO_0000210494" description="Uncharacterized protein MG267">
    <location>
        <begin position="1"/>
        <end position="115"/>
    </location>
</feature>
<feature type="transmembrane region" description="Helical" evidence="1">
    <location>
        <begin position="10"/>
        <end position="30"/>
    </location>
</feature>
<feature type="transmembrane region" description="Helical" evidence="1">
    <location>
        <begin position="47"/>
        <end position="67"/>
    </location>
</feature>
<feature type="transmembrane region" description="Helical" evidence="1">
    <location>
        <begin position="77"/>
        <end position="97"/>
    </location>
</feature>
<evidence type="ECO:0000255" key="1"/>
<evidence type="ECO:0000305" key="2"/>
<organism>
    <name type="scientific">Mycoplasma genitalium (strain ATCC 33530 / DSM 19775 / NCTC 10195 / G37)</name>
    <name type="common">Mycoplasmoides genitalium</name>
    <dbReference type="NCBI Taxonomy" id="243273"/>
    <lineage>
        <taxon>Bacteria</taxon>
        <taxon>Bacillati</taxon>
        <taxon>Mycoplasmatota</taxon>
        <taxon>Mycoplasmoidales</taxon>
        <taxon>Mycoplasmoidaceae</taxon>
        <taxon>Mycoplasmoides</taxon>
    </lineage>
</organism>
<name>Y267_MYCGE</name>
<sequence length="115" mass="13061">MTLLFKLVKIAILVFLMVIGFFIFIGSFWLNTYQTAQWADLLASSDASGIILTIFPNINSWFNATVANQPVLFKTMVHFFIPVGFGLLFGLIIAIIVDILYRLTKYAIKRSYQSN</sequence>
<comment type="subcellular location">
    <subcellularLocation>
        <location evidence="2">Cell membrane</location>
        <topology evidence="2">Multi-pass membrane protein</topology>
    </subcellularLocation>
</comment>
<gene>
    <name type="ordered locus">MG267</name>
</gene>
<keyword id="KW-1003">Cell membrane</keyword>
<keyword id="KW-0472">Membrane</keyword>
<keyword id="KW-1185">Reference proteome</keyword>
<keyword id="KW-0812">Transmembrane</keyword>
<keyword id="KW-1133">Transmembrane helix</keyword>
<dbReference type="EMBL" id="L43967">
    <property type="protein sequence ID" value="AAC71489.1"/>
    <property type="molecule type" value="Genomic_DNA"/>
</dbReference>
<dbReference type="PIR" id="E64229">
    <property type="entry name" value="E64229"/>
</dbReference>
<dbReference type="RefSeq" id="WP_009885898.1">
    <property type="nucleotide sequence ID" value="NC_000908.2"/>
</dbReference>
<dbReference type="SMR" id="P47509"/>
<dbReference type="STRING" id="243273.MG_267"/>
<dbReference type="GeneID" id="88282422"/>
<dbReference type="KEGG" id="mge:MG_267"/>
<dbReference type="eggNOG" id="ENOG5031ZBQ">
    <property type="taxonomic scope" value="Bacteria"/>
</dbReference>
<dbReference type="HOGENOM" id="CLU_2118372_0_0_14"/>
<dbReference type="InParanoid" id="P47509"/>
<dbReference type="OrthoDB" id="9971745at2"/>
<dbReference type="BioCyc" id="MGEN243273:G1GJ2-323-MONOMER"/>
<dbReference type="Proteomes" id="UP000000807">
    <property type="component" value="Chromosome"/>
</dbReference>
<dbReference type="GO" id="GO:0005886">
    <property type="term" value="C:plasma membrane"/>
    <property type="evidence" value="ECO:0007669"/>
    <property type="project" value="UniProtKB-SubCell"/>
</dbReference>
<dbReference type="InterPro" id="IPR054989">
    <property type="entry name" value="MPN454_MG319"/>
</dbReference>
<dbReference type="NCBIfam" id="NF045751">
    <property type="entry name" value="MPN385"/>
    <property type="match status" value="1"/>
</dbReference>
<dbReference type="NCBIfam" id="NF045771">
    <property type="entry name" value="MPN454_MG319"/>
    <property type="match status" value="1"/>
</dbReference>
<protein>
    <recommendedName>
        <fullName>Uncharacterized protein MG267</fullName>
    </recommendedName>
</protein>